<reference key="1">
    <citation type="journal article" date="2001" name="Am. J. Bot.">
        <title>Molecular systematics of the Brassicaceae: evidence from coding plastidic matK and nuclear Chs sequences.</title>
        <authorList>
            <person name="Koch M."/>
            <person name="Haubold B."/>
            <person name="Mitchell-Olds T."/>
        </authorList>
    </citation>
    <scope>NUCLEOTIDE SEQUENCE [GENOMIC DNA]</scope>
</reference>
<reference key="2">
    <citation type="submission" date="2007-03" db="EMBL/GenBank/DDBJ databases">
        <title>Sequence analysis of Arabidopsis pumila JS2 chloroplast DNA.</title>
        <authorList>
            <person name="Hosouchi T."/>
            <person name="Tsuruoka H."/>
            <person name="Kotani H."/>
        </authorList>
    </citation>
    <scope>NUCLEOTIDE SEQUENCE [LARGE SCALE GENOMIC DNA]</scope>
</reference>
<dbReference type="EMBL" id="AF144345">
    <property type="protein sequence ID" value="AAG43314.1"/>
    <property type="molecule type" value="Genomic_DNA"/>
</dbReference>
<dbReference type="EMBL" id="AP009368">
    <property type="protein sequence ID" value="BAF49920.1"/>
    <property type="status" value="ALT_INIT"/>
    <property type="molecule type" value="Genomic_DNA"/>
</dbReference>
<dbReference type="RefSeq" id="YP_001123096.1">
    <property type="nucleotide sequence ID" value="NC_009267.1"/>
</dbReference>
<dbReference type="GeneID" id="4962355"/>
<dbReference type="GO" id="GO:0009507">
    <property type="term" value="C:chloroplast"/>
    <property type="evidence" value="ECO:0007669"/>
    <property type="project" value="UniProtKB-SubCell"/>
</dbReference>
<dbReference type="GO" id="GO:0003723">
    <property type="term" value="F:RNA binding"/>
    <property type="evidence" value="ECO:0007669"/>
    <property type="project" value="UniProtKB-KW"/>
</dbReference>
<dbReference type="GO" id="GO:0006397">
    <property type="term" value="P:mRNA processing"/>
    <property type="evidence" value="ECO:0007669"/>
    <property type="project" value="UniProtKB-KW"/>
</dbReference>
<dbReference type="GO" id="GO:0008380">
    <property type="term" value="P:RNA splicing"/>
    <property type="evidence" value="ECO:0007669"/>
    <property type="project" value="UniProtKB-UniRule"/>
</dbReference>
<dbReference type="GO" id="GO:0008033">
    <property type="term" value="P:tRNA processing"/>
    <property type="evidence" value="ECO:0007669"/>
    <property type="project" value="UniProtKB-KW"/>
</dbReference>
<dbReference type="HAMAP" id="MF_01390">
    <property type="entry name" value="MatK"/>
    <property type="match status" value="1"/>
</dbReference>
<dbReference type="InterPro" id="IPR024937">
    <property type="entry name" value="Domain_X"/>
</dbReference>
<dbReference type="InterPro" id="IPR002866">
    <property type="entry name" value="Maturase_MatK"/>
</dbReference>
<dbReference type="InterPro" id="IPR024942">
    <property type="entry name" value="Maturase_MatK_N"/>
</dbReference>
<dbReference type="PANTHER" id="PTHR34811">
    <property type="entry name" value="MATURASE K"/>
    <property type="match status" value="1"/>
</dbReference>
<dbReference type="PANTHER" id="PTHR34811:SF1">
    <property type="entry name" value="MATURASE K"/>
    <property type="match status" value="1"/>
</dbReference>
<dbReference type="Pfam" id="PF01348">
    <property type="entry name" value="Intron_maturas2"/>
    <property type="match status" value="1"/>
</dbReference>
<dbReference type="Pfam" id="PF01824">
    <property type="entry name" value="MatK_N"/>
    <property type="match status" value="1"/>
</dbReference>
<comment type="function">
    <text evidence="1">Usually encoded in the trnK tRNA gene intron. Probably assists in splicing its own and other chloroplast group II introns.</text>
</comment>
<comment type="subcellular location">
    <subcellularLocation>
        <location>Plastid</location>
        <location>Chloroplast</location>
    </subcellularLocation>
</comment>
<comment type="similarity">
    <text evidence="1">Belongs to the intron maturase 2 family. MatK subfamily.</text>
</comment>
<comment type="sequence caution" evidence="2">
    <conflict type="erroneous initiation">
        <sequence resource="EMBL-CDS" id="BAF49920"/>
    </conflict>
</comment>
<name>MATK_OLIPU</name>
<accession>Q9GF47</accession>
<accession>A4QJR5</accession>
<sequence length="504" mass="60280">MEKFQGYLEFDGARQQSFLYPLFFREYIYVLAYDHGLNRLNKNRSIFLENTDYDKKYSSLIVKRLILRMYEQNRLIIPTKDLNQNSFLGHTSLFYYQMISVLFAVIVEIPFSLRLGSPFQGKQVKKSYNLQSIHSIFPFLEDKLAHFNYVLDVLIPYPIHLEILVQTLRYRVKDASSLHFFRFCLYEYCNWKNFYKKKKSILNPRFFLFLYNSHVCEYESIFFFLRKRSSHLRSTSYEVLFERILFYGKIQYFLKVFVNNFPAILGLLKDPFIHYVRYHGRCVLATKDTPLLMNKWKYYFVNLWQCYFSVWFQSQKVNINQLSKDNLEFLGYLSSLRLNPLVVRSQMLENSFLIDNVRIKLDSKIPISSIIGSLAKDKFCNVLGHPISKATWTDSSDSDILNRFVRICRNISHYYSGSSKKKNLYRIKYILRLCCVKTLARKHKSTVRAFLKRLGSGLLEEFLTGEDQVLSLIFPRSYYAAKRLYRVRIWYLDILYLNDLVNHE</sequence>
<evidence type="ECO:0000255" key="1">
    <source>
        <dbReference type="HAMAP-Rule" id="MF_01390"/>
    </source>
</evidence>
<evidence type="ECO:0000305" key="2"/>
<proteinExistence type="inferred from homology"/>
<protein>
    <recommendedName>
        <fullName evidence="1">Maturase K</fullName>
    </recommendedName>
    <alternativeName>
        <fullName evidence="1">Intron maturase</fullName>
    </alternativeName>
</protein>
<organism>
    <name type="scientific">Olimarabidopsis pumila</name>
    <name type="common">Dwarf rocket</name>
    <name type="synonym">Arabidopsis griffithiana</name>
    <dbReference type="NCBI Taxonomy" id="74718"/>
    <lineage>
        <taxon>Eukaryota</taxon>
        <taxon>Viridiplantae</taxon>
        <taxon>Streptophyta</taxon>
        <taxon>Embryophyta</taxon>
        <taxon>Tracheophyta</taxon>
        <taxon>Spermatophyta</taxon>
        <taxon>Magnoliopsida</taxon>
        <taxon>eudicotyledons</taxon>
        <taxon>Gunneridae</taxon>
        <taxon>Pentapetalae</taxon>
        <taxon>rosids</taxon>
        <taxon>malvids</taxon>
        <taxon>Brassicales</taxon>
        <taxon>Brassicaceae</taxon>
        <taxon>Alyssopsideae</taxon>
        <taxon>Olimarabidopsis</taxon>
    </lineage>
</organism>
<gene>
    <name evidence="1" type="primary">matK</name>
</gene>
<geneLocation type="chloroplast"/>
<keyword id="KW-0150">Chloroplast</keyword>
<keyword id="KW-0507">mRNA processing</keyword>
<keyword id="KW-0934">Plastid</keyword>
<keyword id="KW-0694">RNA-binding</keyword>
<keyword id="KW-0819">tRNA processing</keyword>
<feature type="chain" id="PRO_0000143558" description="Maturase K">
    <location>
        <begin position="1"/>
        <end position="504"/>
    </location>
</feature>
<feature type="sequence conflict" description="In Ref. 1; AAG43314." evidence="2" ref="1">
    <original>E</original>
    <variation>K</variation>
    <location>
        <position position="461"/>
    </location>
</feature>